<feature type="chain" id="PRO_0000297462" description="Erythronate-4-phosphate dehydrogenase">
    <location>
        <begin position="1"/>
        <end position="392"/>
    </location>
</feature>
<feature type="active site" evidence="1">
    <location>
        <position position="215"/>
    </location>
</feature>
<feature type="active site" evidence="1">
    <location>
        <position position="244"/>
    </location>
</feature>
<feature type="active site" description="Proton donor" evidence="1">
    <location>
        <position position="261"/>
    </location>
</feature>
<feature type="binding site" evidence="1">
    <location>
        <position position="48"/>
    </location>
    <ligand>
        <name>substrate</name>
    </ligand>
</feature>
<feature type="binding site" evidence="1">
    <location>
        <position position="69"/>
    </location>
    <ligand>
        <name>substrate</name>
    </ligand>
</feature>
<feature type="binding site" evidence="1">
    <location>
        <position position="149"/>
    </location>
    <ligand>
        <name>NAD(+)</name>
        <dbReference type="ChEBI" id="CHEBI:57540"/>
    </ligand>
</feature>
<feature type="binding site" evidence="1">
    <location>
        <position position="239"/>
    </location>
    <ligand>
        <name>NAD(+)</name>
        <dbReference type="ChEBI" id="CHEBI:57540"/>
    </ligand>
</feature>
<feature type="binding site" evidence="1">
    <location>
        <position position="264"/>
    </location>
    <ligand>
        <name>NAD(+)</name>
        <dbReference type="ChEBI" id="CHEBI:57540"/>
    </ligand>
</feature>
<feature type="binding site" evidence="1">
    <location>
        <position position="265"/>
    </location>
    <ligand>
        <name>substrate</name>
    </ligand>
</feature>
<gene>
    <name evidence="1" type="primary">pdxB</name>
    <name type="ordered locus">SRU_2082</name>
</gene>
<sequence>MTSLQILADANIPRVEDAFGQFGTVRRMPGREMTTSDVAAADVLLVRSVTPVGPALLDGTPLRFVGSATIGTDHVDRDYLRAQGIPFAHAPGSNADSVADYVVAALLGLARRRGGALEERTVGIVGCGNIGGRLARRLSALGMEVLRNDPPRARAADADGTGHGFVPLDTVLGAADVVTLHVPLKASGPDPTHHLVDAAFLDRLGDGAWLLNTSRGAVVDGDALLAARRRGDVAAAVLDVWENEPSPDPALIEAVDLATPHIAGYAYDGKVRGTEMLYEALCDALGGEARWAGTDAIRPASADALRGRAPDPRLSATEWRFELARQAYDPAVDDASLRDLVKLGPDARGEAFAHLRAGYRRRREMQQHTVPGTAVPAEHEQAVTEGLKMKLD</sequence>
<protein>
    <recommendedName>
        <fullName evidence="1">Erythronate-4-phosphate dehydrogenase</fullName>
        <ecNumber evidence="1">1.1.1.290</ecNumber>
    </recommendedName>
</protein>
<comment type="function">
    <text evidence="1">Catalyzes the oxidation of erythronate-4-phosphate to 3-hydroxy-2-oxo-4-phosphonooxybutanoate.</text>
</comment>
<comment type="catalytic activity">
    <reaction evidence="1">
        <text>4-phospho-D-erythronate + NAD(+) = (R)-3-hydroxy-2-oxo-4-phosphooxybutanoate + NADH + H(+)</text>
        <dbReference type="Rhea" id="RHEA:18829"/>
        <dbReference type="ChEBI" id="CHEBI:15378"/>
        <dbReference type="ChEBI" id="CHEBI:57540"/>
        <dbReference type="ChEBI" id="CHEBI:57945"/>
        <dbReference type="ChEBI" id="CHEBI:58538"/>
        <dbReference type="ChEBI" id="CHEBI:58766"/>
        <dbReference type="EC" id="1.1.1.290"/>
    </reaction>
</comment>
<comment type="pathway">
    <text evidence="1">Cofactor biosynthesis; pyridoxine 5'-phosphate biosynthesis; pyridoxine 5'-phosphate from D-erythrose 4-phosphate: step 2/5.</text>
</comment>
<comment type="subunit">
    <text evidence="1">Homodimer.</text>
</comment>
<comment type="subcellular location">
    <subcellularLocation>
        <location evidence="1">Cytoplasm</location>
    </subcellularLocation>
</comment>
<comment type="similarity">
    <text evidence="1">Belongs to the D-isomer specific 2-hydroxyacid dehydrogenase family. PdxB subfamily.</text>
</comment>
<keyword id="KW-0963">Cytoplasm</keyword>
<keyword id="KW-0520">NAD</keyword>
<keyword id="KW-0560">Oxidoreductase</keyword>
<keyword id="KW-0664">Pyridoxine biosynthesis</keyword>
<keyword id="KW-1185">Reference proteome</keyword>
<accession>Q2S0U3</accession>
<reference key="1">
    <citation type="journal article" date="2005" name="Proc. Natl. Acad. Sci. U.S.A.">
        <title>The genome of Salinibacter ruber: convergence and gene exchange among hyperhalophilic bacteria and archaea.</title>
        <authorList>
            <person name="Mongodin E.F."/>
            <person name="Nelson K.E."/>
            <person name="Daugherty S."/>
            <person name="DeBoy R.T."/>
            <person name="Wister J."/>
            <person name="Khouri H."/>
            <person name="Weidman J."/>
            <person name="Walsh D.A."/>
            <person name="Papke R.T."/>
            <person name="Sanchez Perez G."/>
            <person name="Sharma A.K."/>
            <person name="Nesbo C.L."/>
            <person name="MacLeod D."/>
            <person name="Bapteste E."/>
            <person name="Doolittle W.F."/>
            <person name="Charlebois R.L."/>
            <person name="Legault B."/>
            <person name="Rodriguez-Valera F."/>
        </authorList>
    </citation>
    <scope>NUCLEOTIDE SEQUENCE [LARGE SCALE GENOMIC DNA]</scope>
    <source>
        <strain>DSM 13855 / CECT 5946 / M31</strain>
    </source>
</reference>
<proteinExistence type="inferred from homology"/>
<name>PDXB_SALRD</name>
<organism>
    <name type="scientific">Salinibacter ruber (strain DSM 13855 / M31)</name>
    <dbReference type="NCBI Taxonomy" id="309807"/>
    <lineage>
        <taxon>Bacteria</taxon>
        <taxon>Pseudomonadati</taxon>
        <taxon>Rhodothermota</taxon>
        <taxon>Rhodothermia</taxon>
        <taxon>Rhodothermales</taxon>
        <taxon>Salinibacteraceae</taxon>
        <taxon>Salinibacter</taxon>
    </lineage>
</organism>
<evidence type="ECO:0000255" key="1">
    <source>
        <dbReference type="HAMAP-Rule" id="MF_01825"/>
    </source>
</evidence>
<dbReference type="EC" id="1.1.1.290" evidence="1"/>
<dbReference type="EMBL" id="CP000159">
    <property type="protein sequence ID" value="ABC44154.1"/>
    <property type="molecule type" value="Genomic_DNA"/>
</dbReference>
<dbReference type="RefSeq" id="WP_011404810.1">
    <property type="nucleotide sequence ID" value="NC_007677.1"/>
</dbReference>
<dbReference type="RefSeq" id="YP_446188.1">
    <property type="nucleotide sequence ID" value="NC_007677.1"/>
</dbReference>
<dbReference type="SMR" id="Q2S0U3"/>
<dbReference type="STRING" id="309807.SRU_2082"/>
<dbReference type="EnsemblBacteria" id="ABC44154">
    <property type="protein sequence ID" value="ABC44154"/>
    <property type="gene ID" value="SRU_2082"/>
</dbReference>
<dbReference type="KEGG" id="sru:SRU_2082"/>
<dbReference type="PATRIC" id="fig|309807.25.peg.2167"/>
<dbReference type="eggNOG" id="COG0111">
    <property type="taxonomic scope" value="Bacteria"/>
</dbReference>
<dbReference type="HOGENOM" id="CLU_019796_4_0_10"/>
<dbReference type="OrthoDB" id="1522997at2"/>
<dbReference type="UniPathway" id="UPA00244">
    <property type="reaction ID" value="UER00310"/>
</dbReference>
<dbReference type="Proteomes" id="UP000008674">
    <property type="component" value="Chromosome"/>
</dbReference>
<dbReference type="GO" id="GO:0005829">
    <property type="term" value="C:cytosol"/>
    <property type="evidence" value="ECO:0007669"/>
    <property type="project" value="TreeGrafter"/>
</dbReference>
<dbReference type="GO" id="GO:0033711">
    <property type="term" value="F:4-phosphoerythronate dehydrogenase activity"/>
    <property type="evidence" value="ECO:0007669"/>
    <property type="project" value="UniProtKB-EC"/>
</dbReference>
<dbReference type="GO" id="GO:0051287">
    <property type="term" value="F:NAD binding"/>
    <property type="evidence" value="ECO:0007669"/>
    <property type="project" value="InterPro"/>
</dbReference>
<dbReference type="GO" id="GO:0036001">
    <property type="term" value="P:'de novo' pyridoxal 5'-phosphate biosynthetic process"/>
    <property type="evidence" value="ECO:0007669"/>
    <property type="project" value="TreeGrafter"/>
</dbReference>
<dbReference type="GO" id="GO:0008615">
    <property type="term" value="P:pyridoxine biosynthetic process"/>
    <property type="evidence" value="ECO:0007669"/>
    <property type="project" value="UniProtKB-KW"/>
</dbReference>
<dbReference type="CDD" id="cd12158">
    <property type="entry name" value="ErythrP_dh"/>
    <property type="match status" value="1"/>
</dbReference>
<dbReference type="Gene3D" id="3.30.1370.170">
    <property type="match status" value="1"/>
</dbReference>
<dbReference type="Gene3D" id="3.40.50.720">
    <property type="entry name" value="NAD(P)-binding Rossmann-like Domain"/>
    <property type="match status" value="2"/>
</dbReference>
<dbReference type="HAMAP" id="MF_01825">
    <property type="entry name" value="PdxB"/>
    <property type="match status" value="1"/>
</dbReference>
<dbReference type="InterPro" id="IPR006139">
    <property type="entry name" value="D-isomer_2_OHA_DH_cat_dom"/>
</dbReference>
<dbReference type="InterPro" id="IPR006140">
    <property type="entry name" value="D-isomer_DH_NAD-bd"/>
</dbReference>
<dbReference type="InterPro" id="IPR020921">
    <property type="entry name" value="Erythronate-4-P_DHase"/>
</dbReference>
<dbReference type="InterPro" id="IPR036291">
    <property type="entry name" value="NAD(P)-bd_dom_sf"/>
</dbReference>
<dbReference type="InterPro" id="IPR038251">
    <property type="entry name" value="PdxB_dimer_sf"/>
</dbReference>
<dbReference type="PANTHER" id="PTHR42938">
    <property type="entry name" value="FORMATE DEHYDROGENASE 1"/>
    <property type="match status" value="1"/>
</dbReference>
<dbReference type="PANTHER" id="PTHR42938:SF9">
    <property type="entry name" value="FORMATE DEHYDROGENASE 1"/>
    <property type="match status" value="1"/>
</dbReference>
<dbReference type="Pfam" id="PF00389">
    <property type="entry name" value="2-Hacid_dh"/>
    <property type="match status" value="1"/>
</dbReference>
<dbReference type="Pfam" id="PF02826">
    <property type="entry name" value="2-Hacid_dh_C"/>
    <property type="match status" value="1"/>
</dbReference>
<dbReference type="SUPFAM" id="SSF52283">
    <property type="entry name" value="Formate/glycerate dehydrogenase catalytic domain-like"/>
    <property type="match status" value="1"/>
</dbReference>
<dbReference type="SUPFAM" id="SSF51735">
    <property type="entry name" value="NAD(P)-binding Rossmann-fold domains"/>
    <property type="match status" value="1"/>
</dbReference>